<name>Y146_MYCGE</name>
<protein>
    <recommendedName>
        <fullName>UPF0053 protein MG146</fullName>
    </recommendedName>
    <alternativeName>
        <fullName>VXpSPT7_orf424</fullName>
    </alternativeName>
</protein>
<gene>
    <name type="ordered locus">MG146</name>
</gene>
<proteinExistence type="inferred from homology"/>
<feature type="chain" id="PRO_0000088378" description="UPF0053 protein MG146">
    <location>
        <begin position="1"/>
        <end position="424"/>
    </location>
</feature>
<feature type="transmembrane region" description="Helical" evidence="1">
    <location>
        <begin position="7"/>
        <end position="27"/>
    </location>
</feature>
<feature type="transmembrane region" description="Helical" evidence="1">
    <location>
        <begin position="71"/>
        <end position="91"/>
    </location>
</feature>
<feature type="transmembrane region" description="Helical" evidence="1">
    <location>
        <begin position="101"/>
        <end position="121"/>
    </location>
</feature>
<feature type="transmembrane region" description="Helical" evidence="1">
    <location>
        <begin position="135"/>
        <end position="155"/>
    </location>
</feature>
<feature type="domain" description="CNNM transmembrane" evidence="3">
    <location>
        <begin position="6"/>
        <end position="191"/>
    </location>
</feature>
<feature type="domain" description="CBS 1" evidence="2">
    <location>
        <begin position="210"/>
        <end position="270"/>
    </location>
</feature>
<feature type="domain" description="CBS 2" evidence="2">
    <location>
        <begin position="272"/>
        <end position="332"/>
    </location>
</feature>
<dbReference type="EMBL" id="L43967">
    <property type="protein sequence ID" value="AAC71364.1"/>
    <property type="molecule type" value="Genomic_DNA"/>
</dbReference>
<dbReference type="PIR" id="B64216">
    <property type="entry name" value="B64216"/>
</dbReference>
<dbReference type="RefSeq" id="WP_010869353.1">
    <property type="nucleotide sequence ID" value="NC_000908.2"/>
</dbReference>
<dbReference type="SMR" id="Q49399"/>
<dbReference type="FunCoup" id="Q49399">
    <property type="interactions" value="231"/>
</dbReference>
<dbReference type="STRING" id="243273.MG_146"/>
<dbReference type="GeneID" id="88282278"/>
<dbReference type="KEGG" id="mge:MG_146"/>
<dbReference type="eggNOG" id="COG1253">
    <property type="taxonomic scope" value="Bacteria"/>
</dbReference>
<dbReference type="HOGENOM" id="CLU_015237_4_1_14"/>
<dbReference type="InParanoid" id="Q49399"/>
<dbReference type="OrthoDB" id="9798188at2"/>
<dbReference type="BioCyc" id="MGEN243273:G1GJ2-169-MONOMER"/>
<dbReference type="Proteomes" id="UP000000807">
    <property type="component" value="Chromosome"/>
</dbReference>
<dbReference type="GO" id="GO:0005886">
    <property type="term" value="C:plasma membrane"/>
    <property type="evidence" value="ECO:0000318"/>
    <property type="project" value="GO_Central"/>
</dbReference>
<dbReference type="CDD" id="cd04590">
    <property type="entry name" value="CBS_pair_CorC_HlyC_assoc"/>
    <property type="match status" value="1"/>
</dbReference>
<dbReference type="Gene3D" id="3.10.580.10">
    <property type="entry name" value="CBS-domain"/>
    <property type="match status" value="1"/>
</dbReference>
<dbReference type="InterPro" id="IPR000644">
    <property type="entry name" value="CBS_dom"/>
</dbReference>
<dbReference type="InterPro" id="IPR046342">
    <property type="entry name" value="CBS_dom_sf"/>
</dbReference>
<dbReference type="InterPro" id="IPR002550">
    <property type="entry name" value="CNNM"/>
</dbReference>
<dbReference type="InterPro" id="IPR044751">
    <property type="entry name" value="Ion_transp-like_CBS"/>
</dbReference>
<dbReference type="PANTHER" id="PTHR22777">
    <property type="entry name" value="HEMOLYSIN-RELATED"/>
    <property type="match status" value="1"/>
</dbReference>
<dbReference type="PANTHER" id="PTHR22777:SF17">
    <property type="entry name" value="UPF0053 PROTEIN SLL0260"/>
    <property type="match status" value="1"/>
</dbReference>
<dbReference type="Pfam" id="PF00571">
    <property type="entry name" value="CBS"/>
    <property type="match status" value="2"/>
</dbReference>
<dbReference type="Pfam" id="PF01595">
    <property type="entry name" value="CNNM"/>
    <property type="match status" value="1"/>
</dbReference>
<dbReference type="SMART" id="SM00116">
    <property type="entry name" value="CBS"/>
    <property type="match status" value="2"/>
</dbReference>
<dbReference type="SUPFAM" id="SSF54631">
    <property type="entry name" value="CBS-domain pair"/>
    <property type="match status" value="1"/>
</dbReference>
<dbReference type="PROSITE" id="PS51371">
    <property type="entry name" value="CBS"/>
    <property type="match status" value="2"/>
</dbReference>
<dbReference type="PROSITE" id="PS51846">
    <property type="entry name" value="CNNM"/>
    <property type="match status" value="1"/>
</dbReference>
<keyword id="KW-0129">CBS domain</keyword>
<keyword id="KW-1003">Cell membrane</keyword>
<keyword id="KW-0472">Membrane</keyword>
<keyword id="KW-1185">Reference proteome</keyword>
<keyword id="KW-0677">Repeat</keyword>
<keyword id="KW-0812">Transmembrane</keyword>
<keyword id="KW-1133">Transmembrane helix</keyword>
<evidence type="ECO:0000255" key="1"/>
<evidence type="ECO:0000255" key="2">
    <source>
        <dbReference type="PROSITE-ProRule" id="PRU00703"/>
    </source>
</evidence>
<evidence type="ECO:0000255" key="3">
    <source>
        <dbReference type="PROSITE-ProRule" id="PRU01193"/>
    </source>
</evidence>
<evidence type="ECO:0000305" key="4"/>
<organism>
    <name type="scientific">Mycoplasma genitalium (strain ATCC 33530 / DSM 19775 / NCTC 10195 / G37)</name>
    <name type="common">Mycoplasmoides genitalium</name>
    <dbReference type="NCBI Taxonomy" id="243273"/>
    <lineage>
        <taxon>Bacteria</taxon>
        <taxon>Bacillati</taxon>
        <taxon>Mycoplasmatota</taxon>
        <taxon>Mycoplasmoidales</taxon>
        <taxon>Mycoplasmoidaceae</taxon>
        <taxon>Mycoplasmoides</taxon>
    </lineage>
</organism>
<reference key="1">
    <citation type="journal article" date="1995" name="Science">
        <title>The minimal gene complement of Mycoplasma genitalium.</title>
        <authorList>
            <person name="Fraser C.M."/>
            <person name="Gocayne J.D."/>
            <person name="White O."/>
            <person name="Adams M.D."/>
            <person name="Clayton R.A."/>
            <person name="Fleischmann R.D."/>
            <person name="Bult C.J."/>
            <person name="Kerlavage A.R."/>
            <person name="Sutton G.G."/>
            <person name="Kelley J.M."/>
            <person name="Fritchman J.L."/>
            <person name="Weidman J.F."/>
            <person name="Small K.V."/>
            <person name="Sandusky M."/>
            <person name="Fuhrmann J.L."/>
            <person name="Nguyen D.T."/>
            <person name="Utterback T.R."/>
            <person name="Saudek D.M."/>
            <person name="Phillips C.A."/>
            <person name="Merrick J.M."/>
            <person name="Tomb J.-F."/>
            <person name="Dougherty B.A."/>
            <person name="Bott K.F."/>
            <person name="Hu P.-C."/>
            <person name="Lucier T.S."/>
            <person name="Peterson S.N."/>
            <person name="Smith H.O."/>
            <person name="Hutchison C.A. III"/>
            <person name="Venter J.C."/>
        </authorList>
    </citation>
    <scope>NUCLEOTIDE SEQUENCE [LARGE SCALE GENOMIC DNA]</scope>
    <source>
        <strain>ATCC 33530 / DSM 19775 / NCTC 10195 / G37</strain>
    </source>
</reference>
<sequence>MDSAPSGLTLTVIILSIILLAFISTVVSAYETAITSLTPYRWKNYIKTNNKQDKLSTKIINHFQNHYSSCLITILITNNIVAIMVSNILFLALEQTIKNELLSSVLNLVVSGVLIVSFCEILPKTLGRINVIRTLVLFAYLVYFFYLIFWPITKLTSLILKKYENPLPVSRKDVYYFIDEIEQNGLFSKEDSLLIKKTLIFDQVLVKKVMIKWKKVAYCYLNDSINLIAKQFLQRQFSRMPVVDKTTNKIVGFIHLKDFFTAKEANPKSLDLNQLLYPVVLVQDSTPIKQALRQMRLNRAHLAVVNDKHEKTIGIVSMEDIIEELVGEIYDEHDDIQPIQVLDENVWLVLPNVKAAYFFNKWIKPDLVKSKNITIQHYLASLDNDSFACQNKLDTPLFSVEVIADSEDKTKILYEIRKKSDVIA</sequence>
<comment type="subcellular location">
    <subcellularLocation>
        <location evidence="4">Cell membrane</location>
        <topology evidence="4">Multi-pass membrane protein</topology>
    </subcellularLocation>
</comment>
<comment type="similarity">
    <text evidence="4">Belongs to the UPF0053 family.</text>
</comment>
<accession>Q49399</accession>